<reference key="1">
    <citation type="submission" date="2007-06" db="EMBL/GenBank/DDBJ databases">
        <title>Complete sequence of Clostridium beijerinckii NCIMB 8052.</title>
        <authorList>
            <consortium name="US DOE Joint Genome Institute"/>
            <person name="Copeland A."/>
            <person name="Lucas S."/>
            <person name="Lapidus A."/>
            <person name="Barry K."/>
            <person name="Detter J.C."/>
            <person name="Glavina del Rio T."/>
            <person name="Hammon N."/>
            <person name="Israni S."/>
            <person name="Dalin E."/>
            <person name="Tice H."/>
            <person name="Pitluck S."/>
            <person name="Sims D."/>
            <person name="Brettin T."/>
            <person name="Bruce D."/>
            <person name="Tapia R."/>
            <person name="Brainard J."/>
            <person name="Schmutz J."/>
            <person name="Larimer F."/>
            <person name="Land M."/>
            <person name="Hauser L."/>
            <person name="Kyrpides N."/>
            <person name="Mikhailova N."/>
            <person name="Bennet G."/>
            <person name="Cann I."/>
            <person name="Chen J.-S."/>
            <person name="Contreras A.L."/>
            <person name="Jones D."/>
            <person name="Kashket E."/>
            <person name="Mitchell W."/>
            <person name="Stoddard S."/>
            <person name="Schwarz W."/>
            <person name="Qureshi N."/>
            <person name="Young M."/>
            <person name="Shi Z."/>
            <person name="Ezeji T."/>
            <person name="White B."/>
            <person name="Blaschek H."/>
            <person name="Richardson P."/>
        </authorList>
    </citation>
    <scope>NUCLEOTIDE SEQUENCE [LARGE SCALE GENOMIC DNA]</scope>
    <source>
        <strain>ATCC 51743 / NCIMB 8052</strain>
    </source>
</reference>
<sequence length="339" mass="36318">MIINDAIKKLALREELTEDEVRGVINQIMKGEATSSQIGGFLVGLRVNGETPRQILGAVKAIRDNGVKVEIENTEHLIDTCGTGGDGSKTFNISTAVAIVAASGGAKVAKHGNRAVSSKSGCADVLVELGINIDFDEIQSKKIIEENGMAFLFAPKYNGAMKNVSKERKELGIRTIFNLLGPLANPAPITGQLMGVYDGALLKDIGEVLLNLGLKRAMIVHGDDGLDEITITTSTSICEVKDGKIKNYKLDPEKLGFKKATLDDIKGGEAKENAEIIIKILKGERGPKRDIVVLNSGAALYVANLVDSIEDGIKKASELIDSRAAYKKYEELSSLQVIV</sequence>
<name>TRPD_CLOB8</name>
<dbReference type="EC" id="2.4.2.18" evidence="1"/>
<dbReference type="EMBL" id="CP000721">
    <property type="protein sequence ID" value="ABR33923.1"/>
    <property type="molecule type" value="Genomic_DNA"/>
</dbReference>
<dbReference type="SMR" id="A6LU93"/>
<dbReference type="KEGG" id="cbe:Cbei_1751"/>
<dbReference type="eggNOG" id="COG0547">
    <property type="taxonomic scope" value="Bacteria"/>
</dbReference>
<dbReference type="HOGENOM" id="CLU_034315_2_1_9"/>
<dbReference type="UniPathway" id="UPA00035">
    <property type="reaction ID" value="UER00041"/>
</dbReference>
<dbReference type="Proteomes" id="UP000000565">
    <property type="component" value="Chromosome"/>
</dbReference>
<dbReference type="GO" id="GO:0005829">
    <property type="term" value="C:cytosol"/>
    <property type="evidence" value="ECO:0007669"/>
    <property type="project" value="TreeGrafter"/>
</dbReference>
<dbReference type="GO" id="GO:0004048">
    <property type="term" value="F:anthranilate phosphoribosyltransferase activity"/>
    <property type="evidence" value="ECO:0007669"/>
    <property type="project" value="UniProtKB-UniRule"/>
</dbReference>
<dbReference type="GO" id="GO:0000287">
    <property type="term" value="F:magnesium ion binding"/>
    <property type="evidence" value="ECO:0007669"/>
    <property type="project" value="UniProtKB-UniRule"/>
</dbReference>
<dbReference type="GO" id="GO:0000162">
    <property type="term" value="P:L-tryptophan biosynthetic process"/>
    <property type="evidence" value="ECO:0007669"/>
    <property type="project" value="UniProtKB-UniRule"/>
</dbReference>
<dbReference type="FunFam" id="3.40.1030.10:FF:000002">
    <property type="entry name" value="Anthranilate phosphoribosyltransferase"/>
    <property type="match status" value="1"/>
</dbReference>
<dbReference type="Gene3D" id="3.40.1030.10">
    <property type="entry name" value="Nucleoside phosphorylase/phosphoribosyltransferase catalytic domain"/>
    <property type="match status" value="1"/>
</dbReference>
<dbReference type="Gene3D" id="1.20.970.10">
    <property type="entry name" value="Transferase, Pyrimidine Nucleoside Phosphorylase, Chain C"/>
    <property type="match status" value="1"/>
</dbReference>
<dbReference type="HAMAP" id="MF_00211">
    <property type="entry name" value="TrpD"/>
    <property type="match status" value="1"/>
</dbReference>
<dbReference type="InterPro" id="IPR005940">
    <property type="entry name" value="Anthranilate_Pribosyl_Tfrase"/>
</dbReference>
<dbReference type="InterPro" id="IPR000312">
    <property type="entry name" value="Glycosyl_Trfase_fam3"/>
</dbReference>
<dbReference type="InterPro" id="IPR017459">
    <property type="entry name" value="Glycosyl_Trfase_fam3_N_dom"/>
</dbReference>
<dbReference type="InterPro" id="IPR036320">
    <property type="entry name" value="Glycosyl_Trfase_fam3_N_dom_sf"/>
</dbReference>
<dbReference type="InterPro" id="IPR035902">
    <property type="entry name" value="Nuc_phospho_transferase"/>
</dbReference>
<dbReference type="NCBIfam" id="TIGR01245">
    <property type="entry name" value="trpD"/>
    <property type="match status" value="1"/>
</dbReference>
<dbReference type="PANTHER" id="PTHR43285">
    <property type="entry name" value="ANTHRANILATE PHOSPHORIBOSYLTRANSFERASE"/>
    <property type="match status" value="1"/>
</dbReference>
<dbReference type="PANTHER" id="PTHR43285:SF2">
    <property type="entry name" value="ANTHRANILATE PHOSPHORIBOSYLTRANSFERASE"/>
    <property type="match status" value="1"/>
</dbReference>
<dbReference type="Pfam" id="PF02885">
    <property type="entry name" value="Glycos_trans_3N"/>
    <property type="match status" value="1"/>
</dbReference>
<dbReference type="Pfam" id="PF00591">
    <property type="entry name" value="Glycos_transf_3"/>
    <property type="match status" value="1"/>
</dbReference>
<dbReference type="SUPFAM" id="SSF52418">
    <property type="entry name" value="Nucleoside phosphorylase/phosphoribosyltransferase catalytic domain"/>
    <property type="match status" value="1"/>
</dbReference>
<dbReference type="SUPFAM" id="SSF47648">
    <property type="entry name" value="Nucleoside phosphorylase/phosphoribosyltransferase N-terminal domain"/>
    <property type="match status" value="1"/>
</dbReference>
<accession>A6LU93</accession>
<protein>
    <recommendedName>
        <fullName evidence="1">Anthranilate phosphoribosyltransferase</fullName>
        <ecNumber evidence="1">2.4.2.18</ecNumber>
    </recommendedName>
</protein>
<comment type="function">
    <text evidence="1">Catalyzes the transfer of the phosphoribosyl group of 5-phosphorylribose-1-pyrophosphate (PRPP) to anthranilate to yield N-(5'-phosphoribosyl)-anthranilate (PRA).</text>
</comment>
<comment type="catalytic activity">
    <reaction evidence="1">
        <text>N-(5-phospho-beta-D-ribosyl)anthranilate + diphosphate = 5-phospho-alpha-D-ribose 1-diphosphate + anthranilate</text>
        <dbReference type="Rhea" id="RHEA:11768"/>
        <dbReference type="ChEBI" id="CHEBI:16567"/>
        <dbReference type="ChEBI" id="CHEBI:18277"/>
        <dbReference type="ChEBI" id="CHEBI:33019"/>
        <dbReference type="ChEBI" id="CHEBI:58017"/>
        <dbReference type="EC" id="2.4.2.18"/>
    </reaction>
</comment>
<comment type="cofactor">
    <cofactor evidence="1">
        <name>Mg(2+)</name>
        <dbReference type="ChEBI" id="CHEBI:18420"/>
    </cofactor>
    <text evidence="1">Binds 2 magnesium ions per monomer.</text>
</comment>
<comment type="pathway">
    <text evidence="1">Amino-acid biosynthesis; L-tryptophan biosynthesis; L-tryptophan from chorismate: step 2/5.</text>
</comment>
<comment type="subunit">
    <text evidence="1">Homodimer.</text>
</comment>
<comment type="similarity">
    <text evidence="1">Belongs to the anthranilate phosphoribosyltransferase family.</text>
</comment>
<keyword id="KW-0028">Amino-acid biosynthesis</keyword>
<keyword id="KW-0057">Aromatic amino acid biosynthesis</keyword>
<keyword id="KW-0328">Glycosyltransferase</keyword>
<keyword id="KW-0460">Magnesium</keyword>
<keyword id="KW-0479">Metal-binding</keyword>
<keyword id="KW-0808">Transferase</keyword>
<keyword id="KW-0822">Tryptophan biosynthesis</keyword>
<organism>
    <name type="scientific">Clostridium beijerinckii (strain ATCC 51743 / NCIMB 8052)</name>
    <name type="common">Clostridium acetobutylicum</name>
    <dbReference type="NCBI Taxonomy" id="290402"/>
    <lineage>
        <taxon>Bacteria</taxon>
        <taxon>Bacillati</taxon>
        <taxon>Bacillota</taxon>
        <taxon>Clostridia</taxon>
        <taxon>Eubacteriales</taxon>
        <taxon>Clostridiaceae</taxon>
        <taxon>Clostridium</taxon>
    </lineage>
</organism>
<proteinExistence type="inferred from homology"/>
<evidence type="ECO:0000255" key="1">
    <source>
        <dbReference type="HAMAP-Rule" id="MF_00211"/>
    </source>
</evidence>
<feature type="chain" id="PRO_1000198814" description="Anthranilate phosphoribosyltransferase">
    <location>
        <begin position="1"/>
        <end position="339"/>
    </location>
</feature>
<feature type="binding site" evidence="1">
    <location>
        <position position="82"/>
    </location>
    <ligand>
        <name>5-phospho-alpha-D-ribose 1-diphosphate</name>
        <dbReference type="ChEBI" id="CHEBI:58017"/>
    </ligand>
</feature>
<feature type="binding site" evidence="1">
    <location>
        <position position="82"/>
    </location>
    <ligand>
        <name>anthranilate</name>
        <dbReference type="ChEBI" id="CHEBI:16567"/>
        <label>1</label>
    </ligand>
</feature>
<feature type="binding site" evidence="1">
    <location>
        <begin position="85"/>
        <end position="86"/>
    </location>
    <ligand>
        <name>5-phospho-alpha-D-ribose 1-diphosphate</name>
        <dbReference type="ChEBI" id="CHEBI:58017"/>
    </ligand>
</feature>
<feature type="binding site" evidence="1">
    <location>
        <position position="90"/>
    </location>
    <ligand>
        <name>5-phospho-alpha-D-ribose 1-diphosphate</name>
        <dbReference type="ChEBI" id="CHEBI:58017"/>
    </ligand>
</feature>
<feature type="binding site" evidence="1">
    <location>
        <begin position="92"/>
        <end position="95"/>
    </location>
    <ligand>
        <name>5-phospho-alpha-D-ribose 1-diphosphate</name>
        <dbReference type="ChEBI" id="CHEBI:58017"/>
    </ligand>
</feature>
<feature type="binding site" evidence="1">
    <location>
        <position position="94"/>
    </location>
    <ligand>
        <name>Mg(2+)</name>
        <dbReference type="ChEBI" id="CHEBI:18420"/>
        <label>1</label>
    </ligand>
</feature>
<feature type="binding site" evidence="1">
    <location>
        <begin position="110"/>
        <end position="118"/>
    </location>
    <ligand>
        <name>5-phospho-alpha-D-ribose 1-diphosphate</name>
        <dbReference type="ChEBI" id="CHEBI:58017"/>
    </ligand>
</feature>
<feature type="binding site" evidence="1">
    <location>
        <position position="113"/>
    </location>
    <ligand>
        <name>anthranilate</name>
        <dbReference type="ChEBI" id="CHEBI:16567"/>
        <label>1</label>
    </ligand>
</feature>
<feature type="binding site" evidence="1">
    <location>
        <position position="168"/>
    </location>
    <ligand>
        <name>anthranilate</name>
        <dbReference type="ChEBI" id="CHEBI:16567"/>
        <label>2</label>
    </ligand>
</feature>
<feature type="binding site" evidence="1">
    <location>
        <position position="227"/>
    </location>
    <ligand>
        <name>Mg(2+)</name>
        <dbReference type="ChEBI" id="CHEBI:18420"/>
        <label>2</label>
    </ligand>
</feature>
<feature type="binding site" evidence="1">
    <location>
        <position position="228"/>
    </location>
    <ligand>
        <name>Mg(2+)</name>
        <dbReference type="ChEBI" id="CHEBI:18420"/>
        <label>1</label>
    </ligand>
</feature>
<feature type="binding site" evidence="1">
    <location>
        <position position="228"/>
    </location>
    <ligand>
        <name>Mg(2+)</name>
        <dbReference type="ChEBI" id="CHEBI:18420"/>
        <label>2</label>
    </ligand>
</feature>
<gene>
    <name evidence="1" type="primary">trpD</name>
    <name type="ordered locus">Cbei_1751</name>
</gene>